<feature type="chain" id="PRO_0000073884" description="Uncharacterized calcium-binding protein At1g02270">
    <location>
        <begin position="1"/>
        <end position="484"/>
    </location>
</feature>
<feature type="transmembrane region" description="Helical" evidence="1">
    <location>
        <begin position="25"/>
        <end position="45"/>
    </location>
</feature>
<feature type="domain" description="EF-hand" evidence="2">
    <location>
        <begin position="384"/>
        <end position="419"/>
    </location>
</feature>
<feature type="binding site" evidence="3">
    <location>
        <position position="397"/>
    </location>
    <ligand>
        <name>Ca(2+)</name>
        <dbReference type="ChEBI" id="CHEBI:29108"/>
    </ligand>
</feature>
<feature type="binding site" evidence="3">
    <location>
        <position position="399"/>
    </location>
    <ligand>
        <name>Ca(2+)</name>
        <dbReference type="ChEBI" id="CHEBI:29108"/>
    </ligand>
</feature>
<feature type="binding site" evidence="3">
    <location>
        <position position="401"/>
    </location>
    <ligand>
        <name>Ca(2+)</name>
        <dbReference type="ChEBI" id="CHEBI:29108"/>
    </ligand>
</feature>
<feature type="binding site" evidence="3">
    <location>
        <position position="408"/>
    </location>
    <ligand>
        <name>Ca(2+)</name>
        <dbReference type="ChEBI" id="CHEBI:29108"/>
    </ligand>
</feature>
<protein>
    <recommendedName>
        <fullName>Uncharacterized calcium-binding protein At1g02270</fullName>
    </recommendedName>
</protein>
<dbReference type="EMBL" id="U89959">
    <property type="protein sequence ID" value="AAC24386.1"/>
    <property type="status" value="ALT_SEQ"/>
    <property type="molecule type" value="Genomic_DNA"/>
</dbReference>
<dbReference type="EMBL" id="CP002684">
    <property type="protein sequence ID" value="AEE27408.1"/>
    <property type="molecule type" value="Genomic_DNA"/>
</dbReference>
<dbReference type="EMBL" id="AY052704">
    <property type="protein sequence ID" value="AAK96608.1"/>
    <property type="molecule type" value="mRNA"/>
</dbReference>
<dbReference type="EMBL" id="AY063716">
    <property type="protein sequence ID" value="AAL36066.1"/>
    <property type="molecule type" value="mRNA"/>
</dbReference>
<dbReference type="RefSeq" id="NP_563646.1">
    <property type="nucleotide sequence ID" value="NM_100107.5"/>
</dbReference>
<dbReference type="SMR" id="O81916"/>
<dbReference type="FunCoup" id="O81916">
    <property type="interactions" value="11"/>
</dbReference>
<dbReference type="STRING" id="3702.O81916"/>
<dbReference type="PaxDb" id="3702-AT1G02270.1"/>
<dbReference type="ProteomicsDB" id="228569"/>
<dbReference type="EnsemblPlants" id="AT1G02270.1">
    <property type="protein sequence ID" value="AT1G02270.1"/>
    <property type="gene ID" value="AT1G02270"/>
</dbReference>
<dbReference type="GeneID" id="839381"/>
<dbReference type="Gramene" id="AT1G02270.1">
    <property type="protein sequence ID" value="AT1G02270.1"/>
    <property type="gene ID" value="AT1G02270"/>
</dbReference>
<dbReference type="KEGG" id="ath:AT1G02270"/>
<dbReference type="Araport" id="AT1G02270"/>
<dbReference type="TAIR" id="AT1G02270"/>
<dbReference type="eggNOG" id="KOG2338">
    <property type="taxonomic scope" value="Eukaryota"/>
</dbReference>
<dbReference type="HOGENOM" id="CLU_052248_0_0_1"/>
<dbReference type="InParanoid" id="O81916"/>
<dbReference type="OMA" id="GYTIFQL"/>
<dbReference type="OrthoDB" id="10253982at2759"/>
<dbReference type="PhylomeDB" id="O81916"/>
<dbReference type="PRO" id="PR:O81916"/>
<dbReference type="Proteomes" id="UP000006548">
    <property type="component" value="Chromosome 1"/>
</dbReference>
<dbReference type="ExpressionAtlas" id="O81916">
    <property type="expression patterns" value="baseline and differential"/>
</dbReference>
<dbReference type="GO" id="GO:0016020">
    <property type="term" value="C:membrane"/>
    <property type="evidence" value="ECO:0007669"/>
    <property type="project" value="UniProtKB-SubCell"/>
</dbReference>
<dbReference type="GO" id="GO:0005634">
    <property type="term" value="C:nucleus"/>
    <property type="evidence" value="ECO:0007005"/>
    <property type="project" value="TAIR"/>
</dbReference>
<dbReference type="GO" id="GO:0005509">
    <property type="term" value="F:calcium ion binding"/>
    <property type="evidence" value="ECO:0007669"/>
    <property type="project" value="InterPro"/>
</dbReference>
<dbReference type="GO" id="GO:0003824">
    <property type="term" value="F:catalytic activity"/>
    <property type="evidence" value="ECO:0007669"/>
    <property type="project" value="InterPro"/>
</dbReference>
<dbReference type="FunFam" id="3.60.10.10:FF:000055">
    <property type="entry name" value="Putative calcium-binding protein"/>
    <property type="match status" value="1"/>
</dbReference>
<dbReference type="Gene3D" id="1.10.238.10">
    <property type="entry name" value="EF-hand"/>
    <property type="match status" value="1"/>
</dbReference>
<dbReference type="Gene3D" id="3.60.10.10">
    <property type="entry name" value="Endonuclease/exonuclease/phosphatase"/>
    <property type="match status" value="1"/>
</dbReference>
<dbReference type="InterPro" id="IPR050410">
    <property type="entry name" value="CCR4/nocturin_mRNA_transcr"/>
</dbReference>
<dbReference type="InterPro" id="IPR011992">
    <property type="entry name" value="EF-hand-dom_pair"/>
</dbReference>
<dbReference type="InterPro" id="IPR002048">
    <property type="entry name" value="EF_hand_dom"/>
</dbReference>
<dbReference type="InterPro" id="IPR036691">
    <property type="entry name" value="Endo/exonu/phosph_ase_sf"/>
</dbReference>
<dbReference type="InterPro" id="IPR005135">
    <property type="entry name" value="Endo/exonuclease/phosphatase"/>
</dbReference>
<dbReference type="PANTHER" id="PTHR12121">
    <property type="entry name" value="CARBON CATABOLITE REPRESSOR PROTEIN 4"/>
    <property type="match status" value="1"/>
</dbReference>
<dbReference type="PANTHER" id="PTHR12121:SF50">
    <property type="entry name" value="ENDONUCLEASE_EXONUCLEASE_PHOSPHATASE FAMILY PROTEIN"/>
    <property type="match status" value="1"/>
</dbReference>
<dbReference type="Pfam" id="PF03372">
    <property type="entry name" value="Exo_endo_phos"/>
    <property type="match status" value="1"/>
</dbReference>
<dbReference type="SUPFAM" id="SSF56219">
    <property type="entry name" value="DNase I-like"/>
    <property type="match status" value="1"/>
</dbReference>
<dbReference type="SUPFAM" id="SSF47473">
    <property type="entry name" value="EF-hand"/>
    <property type="match status" value="1"/>
</dbReference>
<dbReference type="PROSITE" id="PS50222">
    <property type="entry name" value="EF_HAND_2"/>
    <property type="match status" value="1"/>
</dbReference>
<comment type="subcellular location">
    <subcellularLocation>
        <location evidence="3">Membrane</location>
        <topology evidence="3">Single-pass membrane protein</topology>
    </subcellularLocation>
</comment>
<comment type="sequence caution" evidence="3">
    <conflict type="erroneous gene model prediction">
        <sequence resource="EMBL-CDS" id="AAC24386"/>
    </conflict>
</comment>
<proteinExistence type="evidence at transcript level"/>
<organism>
    <name type="scientific">Arabidopsis thaliana</name>
    <name type="common">Mouse-ear cress</name>
    <dbReference type="NCBI Taxonomy" id="3702"/>
    <lineage>
        <taxon>Eukaryota</taxon>
        <taxon>Viridiplantae</taxon>
        <taxon>Streptophyta</taxon>
        <taxon>Embryophyta</taxon>
        <taxon>Tracheophyta</taxon>
        <taxon>Spermatophyta</taxon>
        <taxon>Magnoliopsida</taxon>
        <taxon>eudicotyledons</taxon>
        <taxon>Gunneridae</taxon>
        <taxon>Pentapetalae</taxon>
        <taxon>rosids</taxon>
        <taxon>malvids</taxon>
        <taxon>Brassicales</taxon>
        <taxon>Brassicaceae</taxon>
        <taxon>Camelineae</taxon>
        <taxon>Arabidopsis</taxon>
    </lineage>
</organism>
<keyword id="KW-0106">Calcium</keyword>
<keyword id="KW-0472">Membrane</keyword>
<keyword id="KW-0479">Metal-binding</keyword>
<keyword id="KW-1185">Reference proteome</keyword>
<keyword id="KW-0812">Transmembrane</keyword>
<keyword id="KW-1133">Transmembrane helix</keyword>
<name>YC22_ARATH</name>
<evidence type="ECO:0000255" key="1"/>
<evidence type="ECO:0000255" key="2">
    <source>
        <dbReference type="PROSITE-ProRule" id="PRU00448"/>
    </source>
</evidence>
<evidence type="ECO:0000305" key="3"/>
<sequence length="484" mass="55474">MQSHQNRSRLSLILRSRFIPSFSSPLSLFVVLAAVPLPIYFSGLLSGRNNKPLSVMRLNSNLASSMVESNISCTTFNILAPIYKRVDQKNHSTRESDFRTLWLARNQRILDLLLHQRSSVICLQEVWVGNEELVNMYHHQLSSSGYTIYQLARTNSRGDGLLTAIHKDHFKVVNYRELLFNDFGDRVAQLLHVKTVIPFPLNGKQDVQQEVIIVNTHLLFPHDSSLSIVRLHQVYKILEYLEAYQKENKLNHMPIILCGDWNGSKRGHVYKFLRSQGFISSYDDAHQYTDSDAHRWVSHRNHRGNICGVDFIWLCNPSDSRKPLRTSWVEAVFSIIKYQLHKASIAEDDAFTFLGAKNHSDSLTYSDFCLALQKVNLTGIPHGLSFEETKELWVRADLDGNGVFDYEELKKIWNMTMVNQPGNCKESVMESKKEEGEDEAIGLKVNKAILFPQEAEKGLWPENYNISDHACLTVQFSPVKMLCS</sequence>
<gene>
    <name type="ordered locus">At1g02270</name>
    <name type="ORF">T6A9_9</name>
    <name type="ORF">T7I23.22</name>
</gene>
<reference key="1">
    <citation type="journal article" date="2000" name="Nature">
        <title>Sequence and analysis of chromosome 1 of the plant Arabidopsis thaliana.</title>
        <authorList>
            <person name="Theologis A."/>
            <person name="Ecker J.R."/>
            <person name="Palm C.J."/>
            <person name="Federspiel N.A."/>
            <person name="Kaul S."/>
            <person name="White O."/>
            <person name="Alonso J."/>
            <person name="Altafi H."/>
            <person name="Araujo R."/>
            <person name="Bowman C.L."/>
            <person name="Brooks S.Y."/>
            <person name="Buehler E."/>
            <person name="Chan A."/>
            <person name="Chao Q."/>
            <person name="Chen H."/>
            <person name="Cheuk R.F."/>
            <person name="Chin C.W."/>
            <person name="Chung M.K."/>
            <person name="Conn L."/>
            <person name="Conway A.B."/>
            <person name="Conway A.R."/>
            <person name="Creasy T.H."/>
            <person name="Dewar K."/>
            <person name="Dunn P."/>
            <person name="Etgu P."/>
            <person name="Feldblyum T.V."/>
            <person name="Feng J.-D."/>
            <person name="Fong B."/>
            <person name="Fujii C.Y."/>
            <person name="Gill J.E."/>
            <person name="Goldsmith A.D."/>
            <person name="Haas B."/>
            <person name="Hansen N.F."/>
            <person name="Hughes B."/>
            <person name="Huizar L."/>
            <person name="Hunter J.L."/>
            <person name="Jenkins J."/>
            <person name="Johnson-Hopson C."/>
            <person name="Khan S."/>
            <person name="Khaykin E."/>
            <person name="Kim C.J."/>
            <person name="Koo H.L."/>
            <person name="Kremenetskaia I."/>
            <person name="Kurtz D.B."/>
            <person name="Kwan A."/>
            <person name="Lam B."/>
            <person name="Langin-Hooper S."/>
            <person name="Lee A."/>
            <person name="Lee J.M."/>
            <person name="Lenz C.A."/>
            <person name="Li J.H."/>
            <person name="Li Y.-P."/>
            <person name="Lin X."/>
            <person name="Liu S.X."/>
            <person name="Liu Z.A."/>
            <person name="Luros J.S."/>
            <person name="Maiti R."/>
            <person name="Marziali A."/>
            <person name="Militscher J."/>
            <person name="Miranda M."/>
            <person name="Nguyen M."/>
            <person name="Nierman W.C."/>
            <person name="Osborne B.I."/>
            <person name="Pai G."/>
            <person name="Peterson J."/>
            <person name="Pham P.K."/>
            <person name="Rizzo M."/>
            <person name="Rooney T."/>
            <person name="Rowley D."/>
            <person name="Sakano H."/>
            <person name="Salzberg S.L."/>
            <person name="Schwartz J.R."/>
            <person name="Shinn P."/>
            <person name="Southwick A.M."/>
            <person name="Sun H."/>
            <person name="Tallon L.J."/>
            <person name="Tambunga G."/>
            <person name="Toriumi M.J."/>
            <person name="Town C.D."/>
            <person name="Utterback T."/>
            <person name="Van Aken S."/>
            <person name="Vaysberg M."/>
            <person name="Vysotskaia V.S."/>
            <person name="Walker M."/>
            <person name="Wu D."/>
            <person name="Yu G."/>
            <person name="Fraser C.M."/>
            <person name="Venter J.C."/>
            <person name="Davis R.W."/>
        </authorList>
    </citation>
    <scope>NUCLEOTIDE SEQUENCE [LARGE SCALE GENOMIC DNA]</scope>
    <source>
        <strain>cv. Columbia</strain>
    </source>
</reference>
<reference key="2">
    <citation type="journal article" date="2017" name="Plant J.">
        <title>Araport11: a complete reannotation of the Arabidopsis thaliana reference genome.</title>
        <authorList>
            <person name="Cheng C.Y."/>
            <person name="Krishnakumar V."/>
            <person name="Chan A.P."/>
            <person name="Thibaud-Nissen F."/>
            <person name="Schobel S."/>
            <person name="Town C.D."/>
        </authorList>
    </citation>
    <scope>GENOME REANNOTATION</scope>
    <source>
        <strain>cv. Columbia</strain>
    </source>
</reference>
<reference key="3">
    <citation type="journal article" date="2003" name="Science">
        <title>Empirical analysis of transcriptional activity in the Arabidopsis genome.</title>
        <authorList>
            <person name="Yamada K."/>
            <person name="Lim J."/>
            <person name="Dale J.M."/>
            <person name="Chen H."/>
            <person name="Shinn P."/>
            <person name="Palm C.J."/>
            <person name="Southwick A.M."/>
            <person name="Wu H.C."/>
            <person name="Kim C.J."/>
            <person name="Nguyen M."/>
            <person name="Pham P.K."/>
            <person name="Cheuk R.F."/>
            <person name="Karlin-Newmann G."/>
            <person name="Liu S.X."/>
            <person name="Lam B."/>
            <person name="Sakano H."/>
            <person name="Wu T."/>
            <person name="Yu G."/>
            <person name="Miranda M."/>
            <person name="Quach H.L."/>
            <person name="Tripp M."/>
            <person name="Chang C.H."/>
            <person name="Lee J.M."/>
            <person name="Toriumi M.J."/>
            <person name="Chan M.M."/>
            <person name="Tang C.C."/>
            <person name="Onodera C.S."/>
            <person name="Deng J.M."/>
            <person name="Akiyama K."/>
            <person name="Ansari Y."/>
            <person name="Arakawa T."/>
            <person name="Banh J."/>
            <person name="Banno F."/>
            <person name="Bowser L."/>
            <person name="Brooks S.Y."/>
            <person name="Carninci P."/>
            <person name="Chao Q."/>
            <person name="Choy N."/>
            <person name="Enju A."/>
            <person name="Goldsmith A.D."/>
            <person name="Gurjal M."/>
            <person name="Hansen N.F."/>
            <person name="Hayashizaki Y."/>
            <person name="Johnson-Hopson C."/>
            <person name="Hsuan V.W."/>
            <person name="Iida K."/>
            <person name="Karnes M."/>
            <person name="Khan S."/>
            <person name="Koesema E."/>
            <person name="Ishida J."/>
            <person name="Jiang P.X."/>
            <person name="Jones T."/>
            <person name="Kawai J."/>
            <person name="Kamiya A."/>
            <person name="Meyers C."/>
            <person name="Nakajima M."/>
            <person name="Narusaka M."/>
            <person name="Seki M."/>
            <person name="Sakurai T."/>
            <person name="Satou M."/>
            <person name="Tamse R."/>
            <person name="Vaysberg M."/>
            <person name="Wallender E.K."/>
            <person name="Wong C."/>
            <person name="Yamamura Y."/>
            <person name="Yuan S."/>
            <person name="Shinozaki K."/>
            <person name="Davis R.W."/>
            <person name="Theologis A."/>
            <person name="Ecker J.R."/>
        </authorList>
    </citation>
    <scope>NUCLEOTIDE SEQUENCE [LARGE SCALE MRNA]</scope>
    <source>
        <strain>cv. Columbia</strain>
    </source>
</reference>
<accession>O81916</accession>
<accession>Q940T7</accession>